<sequence length="79" mass="9481">MKMNPCTVILCKSLFFFCLFQVDCYCNRKNIQNQSSRIATKIKRSYWFRWQKHIILANIHKIIKAYQRSIIKLPVTKGL</sequence>
<protein>
    <recommendedName>
        <fullName>Uncharacterized protein YBL008W-A</fullName>
    </recommendedName>
</protein>
<proteinExistence type="inferred from homology"/>
<name>YB008_YEAST</name>
<dbReference type="EMBL" id="Z35770">
    <property type="status" value="NOT_ANNOTATED_CDS"/>
    <property type="molecule type" value="Genomic_DNA"/>
</dbReference>
<dbReference type="EMBL" id="BK006936">
    <property type="protein sequence ID" value="DAA07111.1"/>
    <property type="molecule type" value="Genomic_DNA"/>
</dbReference>
<dbReference type="RefSeq" id="NP_878046.1">
    <property type="nucleotide sequence ID" value="NM_001184539.1"/>
</dbReference>
<dbReference type="BioGRID" id="36984">
    <property type="interactions" value="17"/>
</dbReference>
<dbReference type="FunCoup" id="Q3E821">
    <property type="interactions" value="2"/>
</dbReference>
<dbReference type="STRING" id="4932.YBL008W-A"/>
<dbReference type="GlyGen" id="Q3E821">
    <property type="glycosylation" value="1 site"/>
</dbReference>
<dbReference type="PaxDb" id="4932-YBL008W-A"/>
<dbReference type="EnsemblFungi" id="YBL008W-A_mRNA">
    <property type="protein sequence ID" value="YBL008W-A"/>
    <property type="gene ID" value="YBL008W-A"/>
</dbReference>
<dbReference type="GeneID" id="1466442"/>
<dbReference type="KEGG" id="sce:YBL008W-A"/>
<dbReference type="AGR" id="SGD:S000028529"/>
<dbReference type="SGD" id="S000028529">
    <property type="gene designation" value="YBL008W-A"/>
</dbReference>
<dbReference type="VEuPathDB" id="FungiDB:YBL008W-A"/>
<dbReference type="HOGENOM" id="CLU_2607357_0_0_1"/>
<dbReference type="InParanoid" id="Q3E821"/>
<dbReference type="BioCyc" id="YEAST:G3O-29257-MONOMER"/>
<dbReference type="BioGRID-ORCS" id="1466442">
    <property type="hits" value="0 hits in 10 CRISPR screens"/>
</dbReference>
<dbReference type="PRO" id="PR:Q3E821"/>
<dbReference type="Proteomes" id="UP000002311">
    <property type="component" value="Chromosome II"/>
</dbReference>
<dbReference type="RNAct" id="Q3E821">
    <property type="molecule type" value="protein"/>
</dbReference>
<dbReference type="GO" id="GO:0005576">
    <property type="term" value="C:extracellular region"/>
    <property type="evidence" value="ECO:0007669"/>
    <property type="project" value="UniProtKB-SubCell"/>
</dbReference>
<accession>Q3E821</accession>
<accession>D6VPZ1</accession>
<keyword id="KW-0325">Glycoprotein</keyword>
<keyword id="KW-1185">Reference proteome</keyword>
<keyword id="KW-0964">Secreted</keyword>
<keyword id="KW-0732">Signal</keyword>
<comment type="subcellular location">
    <subcellularLocation>
        <location evidence="2">Secreted</location>
    </subcellularLocation>
</comment>
<evidence type="ECO:0000255" key="1"/>
<evidence type="ECO:0000305" key="2"/>
<gene>
    <name type="ordered locus">YBL008W-A</name>
</gene>
<reference key="1">
    <citation type="journal article" date="1994" name="EMBO J.">
        <title>Complete DNA sequence of yeast chromosome II.</title>
        <authorList>
            <person name="Feldmann H."/>
            <person name="Aigle M."/>
            <person name="Aljinovic G."/>
            <person name="Andre B."/>
            <person name="Baclet M.C."/>
            <person name="Barthe C."/>
            <person name="Baur A."/>
            <person name="Becam A.-M."/>
            <person name="Biteau N."/>
            <person name="Boles E."/>
            <person name="Brandt T."/>
            <person name="Brendel M."/>
            <person name="Brueckner M."/>
            <person name="Bussereau F."/>
            <person name="Christiansen C."/>
            <person name="Contreras R."/>
            <person name="Crouzet M."/>
            <person name="Cziepluch C."/>
            <person name="Demolis N."/>
            <person name="Delaveau T."/>
            <person name="Doignon F."/>
            <person name="Domdey H."/>
            <person name="Duesterhus S."/>
            <person name="Dubois E."/>
            <person name="Dujon B."/>
            <person name="El Bakkoury M."/>
            <person name="Entian K.-D."/>
            <person name="Feuermann M."/>
            <person name="Fiers W."/>
            <person name="Fobo G.M."/>
            <person name="Fritz C."/>
            <person name="Gassenhuber J."/>
            <person name="Glansdorff N."/>
            <person name="Goffeau A."/>
            <person name="Grivell L.A."/>
            <person name="de Haan M."/>
            <person name="Hein C."/>
            <person name="Herbert C.J."/>
            <person name="Hollenberg C.P."/>
            <person name="Holmstroem K."/>
            <person name="Jacq C."/>
            <person name="Jacquet M."/>
            <person name="Jauniaux J.-C."/>
            <person name="Jonniaux J.-L."/>
            <person name="Kallesoee T."/>
            <person name="Kiesau P."/>
            <person name="Kirchrath L."/>
            <person name="Koetter P."/>
            <person name="Korol S."/>
            <person name="Liebl S."/>
            <person name="Logghe M."/>
            <person name="Lohan A.J.E."/>
            <person name="Louis E.J."/>
            <person name="Li Z.Y."/>
            <person name="Maat M.J."/>
            <person name="Mallet L."/>
            <person name="Mannhaupt G."/>
            <person name="Messenguy F."/>
            <person name="Miosga T."/>
            <person name="Molemans F."/>
            <person name="Mueller S."/>
            <person name="Nasr F."/>
            <person name="Obermaier B."/>
            <person name="Perea J."/>
            <person name="Pierard A."/>
            <person name="Piravandi E."/>
            <person name="Pohl F.M."/>
            <person name="Pohl T.M."/>
            <person name="Potier S."/>
            <person name="Proft M."/>
            <person name="Purnelle B."/>
            <person name="Ramezani Rad M."/>
            <person name="Rieger M."/>
            <person name="Rose M."/>
            <person name="Schaaff-Gerstenschlaeger I."/>
            <person name="Scherens B."/>
            <person name="Schwarzlose C."/>
            <person name="Skala J."/>
            <person name="Slonimski P.P."/>
            <person name="Smits P.H.M."/>
            <person name="Souciet J.-L."/>
            <person name="Steensma H.Y."/>
            <person name="Stucka R."/>
            <person name="Urrestarazu L.A."/>
            <person name="van der Aart Q.J.M."/>
            <person name="Van Dyck L."/>
            <person name="Vassarotti A."/>
            <person name="Vetter I."/>
            <person name="Vierendeels F."/>
            <person name="Vissers S."/>
            <person name="Wagner G."/>
            <person name="de Wergifosse P."/>
            <person name="Wolfe K.H."/>
            <person name="Zagulski M."/>
            <person name="Zimmermann F.K."/>
            <person name="Mewes H.-W."/>
            <person name="Kleine K."/>
        </authorList>
    </citation>
    <scope>NUCLEOTIDE SEQUENCE [LARGE SCALE GENOMIC DNA]</scope>
    <source>
        <strain>ATCC 204508 / S288c</strain>
    </source>
</reference>
<reference key="2">
    <citation type="journal article" date="2014" name="G3 (Bethesda)">
        <title>The reference genome sequence of Saccharomyces cerevisiae: Then and now.</title>
        <authorList>
            <person name="Engel S.R."/>
            <person name="Dietrich F.S."/>
            <person name="Fisk D.G."/>
            <person name="Binkley G."/>
            <person name="Balakrishnan R."/>
            <person name="Costanzo M.C."/>
            <person name="Dwight S.S."/>
            <person name="Hitz B.C."/>
            <person name="Karra K."/>
            <person name="Nash R.S."/>
            <person name="Weng S."/>
            <person name="Wong E.D."/>
            <person name="Lloyd P."/>
            <person name="Skrzypek M.S."/>
            <person name="Miyasato S.R."/>
            <person name="Simison M."/>
            <person name="Cherry J.M."/>
        </authorList>
    </citation>
    <scope>GENOME REANNOTATION</scope>
    <source>
        <strain>ATCC 204508 / S288c</strain>
    </source>
</reference>
<reference key="3">
    <citation type="journal article" date="2003" name="Genome Res.">
        <title>Systematic discovery of new genes in the Saccharomyces cerevisiae genome.</title>
        <authorList>
            <person name="Kessler M.M."/>
            <person name="Zeng Q."/>
            <person name="Hogan S."/>
            <person name="Cook R."/>
            <person name="Morales A.J."/>
            <person name="Cottarel G."/>
        </authorList>
    </citation>
    <scope>GENOME REANNOTATION</scope>
</reference>
<feature type="signal peptide" evidence="1">
    <location>
        <begin position="1"/>
        <end position="24"/>
    </location>
</feature>
<feature type="chain" id="PRO_0000248434" description="Uncharacterized protein YBL008W-A">
    <location>
        <begin position="25"/>
        <end position="79"/>
    </location>
</feature>
<feature type="glycosylation site" description="N-linked (GlcNAc...) asparagine" evidence="1">
    <location>
        <position position="33"/>
    </location>
</feature>
<organism>
    <name type="scientific">Saccharomyces cerevisiae (strain ATCC 204508 / S288c)</name>
    <name type="common">Baker's yeast</name>
    <dbReference type="NCBI Taxonomy" id="559292"/>
    <lineage>
        <taxon>Eukaryota</taxon>
        <taxon>Fungi</taxon>
        <taxon>Dikarya</taxon>
        <taxon>Ascomycota</taxon>
        <taxon>Saccharomycotina</taxon>
        <taxon>Saccharomycetes</taxon>
        <taxon>Saccharomycetales</taxon>
        <taxon>Saccharomycetaceae</taxon>
        <taxon>Saccharomyces</taxon>
    </lineage>
</organism>